<evidence type="ECO:0000255" key="1"/>
<evidence type="ECO:0000256" key="2">
    <source>
        <dbReference type="SAM" id="MobiDB-lite"/>
    </source>
</evidence>
<evidence type="ECO:0000269" key="3">
    <source>
    </source>
</evidence>
<evidence type="ECO:0000303" key="4">
    <source>
    </source>
</evidence>
<evidence type="ECO:0000305" key="5"/>
<evidence type="ECO:0007744" key="6">
    <source>
    </source>
</evidence>
<evidence type="ECO:0007744" key="7">
    <source>
    </source>
</evidence>
<evidence type="ECO:0007744" key="8">
    <source>
    </source>
</evidence>
<evidence type="ECO:0007744" key="9">
    <source>
    </source>
</evidence>
<keyword id="KW-0025">Alternative splicing</keyword>
<keyword id="KW-0175">Coiled coil</keyword>
<keyword id="KW-0539">Nucleus</keyword>
<keyword id="KW-0597">Phosphoprotein</keyword>
<keyword id="KW-1267">Proteomics identification</keyword>
<keyword id="KW-1185">Reference proteome</keyword>
<keyword id="KW-0690">Ribosome biogenesis</keyword>
<keyword id="KW-0698">rRNA processing</keyword>
<accession>Q96EU6</accession>
<accession>Q9BRF6</accession>
<accession>Q9P0C8</accession>
<feature type="chain" id="PRO_0000252157" description="Ribosomal RNA processing protein 36 homolog">
    <location>
        <begin position="1"/>
        <end position="259"/>
    </location>
</feature>
<feature type="region of interest" description="Disordered" evidence="2">
    <location>
        <begin position="1"/>
        <end position="38"/>
    </location>
</feature>
<feature type="region of interest" description="Disordered" evidence="2">
    <location>
        <begin position="233"/>
        <end position="259"/>
    </location>
</feature>
<feature type="coiled-coil region" evidence="1">
    <location>
        <begin position="157"/>
        <end position="205"/>
    </location>
</feature>
<feature type="short sequence motif" description="Nuclear localization signal" evidence="1">
    <location>
        <begin position="241"/>
        <end position="244"/>
    </location>
</feature>
<feature type="compositionally biased region" description="Basic residues" evidence="2">
    <location>
        <begin position="240"/>
        <end position="259"/>
    </location>
</feature>
<feature type="modified residue" description="Phosphoserine" evidence="6 7 8 9">
    <location>
        <position position="73"/>
    </location>
</feature>
<feature type="splice variant" id="VSP_020884" description="In isoform 2." evidence="4">
    <location>
        <begin position="18"/>
        <end position="23"/>
    </location>
</feature>
<feature type="sequence variant" id="VAR_027786" description="In dbSNP:rs3749903.">
    <original>A</original>
    <variation>G</variation>
    <location>
        <position position="78"/>
    </location>
</feature>
<feature type="sequence conflict" description="In Ref. 3; AAF28931." evidence="5" ref="3">
    <original>V</original>
    <variation>F</variation>
    <location>
        <position position="88"/>
    </location>
</feature>
<organism>
    <name type="scientific">Homo sapiens</name>
    <name type="common">Human</name>
    <dbReference type="NCBI Taxonomy" id="9606"/>
    <lineage>
        <taxon>Eukaryota</taxon>
        <taxon>Metazoa</taxon>
        <taxon>Chordata</taxon>
        <taxon>Craniata</taxon>
        <taxon>Vertebrata</taxon>
        <taxon>Euteleostomi</taxon>
        <taxon>Mammalia</taxon>
        <taxon>Eutheria</taxon>
        <taxon>Euarchontoglires</taxon>
        <taxon>Primates</taxon>
        <taxon>Haplorrhini</taxon>
        <taxon>Catarrhini</taxon>
        <taxon>Hominidae</taxon>
        <taxon>Homo</taxon>
    </lineage>
</organism>
<gene>
    <name type="primary">RRP36</name>
    <name type="synonym">C6orf153</name>
    <name type="ORF">HSPC253</name>
</gene>
<name>RRP36_HUMAN</name>
<sequence length="259" mass="29823">MPGANYRAGAGAGAGARRPRGARDREEDGGGLEPAAVARDLLRGTSNMSFEELLELQSQVGTKTYKQLVAGNSPKKQASRPPIQNACVADKHRPLEMSAKIRVPFLRQVVPISKKVARDPRFDDLSGEYNPEVFDKTYQFLNDIRAKEKELVKKQLKKHLSGEEHEKLQQLLQRMEQQEMAQQERKQQQELHLALKQERRAQAQQGHRPYFLKKSEQRQLALAEKFKELKRSKKLENFLSRKRRRNAGKDRRHLPLSKE</sequence>
<proteinExistence type="evidence at protein level"/>
<comment type="function">
    <text evidence="3">Involved in the early processing steps of the pre-rRNA in the maturation pathway leading to the 18S rRNA.</text>
</comment>
<comment type="subcellular location">
    <subcellularLocation>
        <location evidence="3">Nucleus</location>
        <location evidence="3">Nucleolus</location>
    </subcellularLocation>
    <text>Concentrated in the fibrillar region of the nucleolus.</text>
</comment>
<comment type="alternative products">
    <event type="alternative splicing"/>
    <isoform>
        <id>Q96EU6-1</id>
        <name>1</name>
        <sequence type="displayed"/>
    </isoform>
    <isoform>
        <id>Q96EU6-2</id>
        <name>2</name>
        <sequence type="described" ref="VSP_020884"/>
    </isoform>
</comment>
<comment type="miscellaneous">
    <text>Meningioma antigen.</text>
</comment>
<comment type="similarity">
    <text evidence="5">Belongs to the RRP36 family.</text>
</comment>
<comment type="sequence caution" evidence="5">
    <conflict type="erroneous initiation">
        <sequence resource="EMBL-CDS" id="AAH06293"/>
    </conflict>
    <text>Extended N-terminus.</text>
</comment>
<protein>
    <recommendedName>
        <fullName>Ribosomal RNA processing protein 36 homolog</fullName>
    </recommendedName>
</protein>
<dbReference type="EMBL" id="AL136304">
    <property type="status" value="NOT_ANNOTATED_CDS"/>
    <property type="molecule type" value="Genomic_DNA"/>
</dbReference>
<dbReference type="EMBL" id="BC006293">
    <property type="protein sequence ID" value="AAH06293.2"/>
    <property type="status" value="ALT_INIT"/>
    <property type="molecule type" value="mRNA"/>
</dbReference>
<dbReference type="EMBL" id="BC011933">
    <property type="protein sequence ID" value="AAH11933.1"/>
    <property type="molecule type" value="mRNA"/>
</dbReference>
<dbReference type="EMBL" id="AF161371">
    <property type="protein sequence ID" value="AAF28931.1"/>
    <property type="molecule type" value="mRNA"/>
</dbReference>
<dbReference type="CCDS" id="CCDS34453.1">
    <molecule id="Q96EU6-1"/>
</dbReference>
<dbReference type="RefSeq" id="NP_001316633.1">
    <property type="nucleotide sequence ID" value="NM_001329704.1"/>
</dbReference>
<dbReference type="RefSeq" id="NP_149103.1">
    <molecule id="Q96EU6-1"/>
    <property type="nucleotide sequence ID" value="NM_033112.4"/>
</dbReference>
<dbReference type="SMR" id="Q96EU6"/>
<dbReference type="BioGRID" id="124584">
    <property type="interactions" value="66"/>
</dbReference>
<dbReference type="FunCoup" id="Q96EU6">
    <property type="interactions" value="2292"/>
</dbReference>
<dbReference type="IntAct" id="Q96EU6">
    <property type="interactions" value="53"/>
</dbReference>
<dbReference type="MINT" id="Q96EU6"/>
<dbReference type="STRING" id="9606.ENSP00000244496"/>
<dbReference type="iPTMnet" id="Q96EU6"/>
<dbReference type="PhosphoSitePlus" id="Q96EU6"/>
<dbReference type="BioMuta" id="RRP36"/>
<dbReference type="DMDM" id="74751848"/>
<dbReference type="jPOST" id="Q96EU6"/>
<dbReference type="MassIVE" id="Q96EU6"/>
<dbReference type="PaxDb" id="9606-ENSP00000244496"/>
<dbReference type="PeptideAtlas" id="Q96EU6"/>
<dbReference type="ProteomicsDB" id="76450">
    <molecule id="Q96EU6-1"/>
</dbReference>
<dbReference type="ProteomicsDB" id="76451">
    <molecule id="Q96EU6-2"/>
</dbReference>
<dbReference type="Pumba" id="Q96EU6"/>
<dbReference type="Antibodypedia" id="30248">
    <property type="antibodies" value="77 antibodies from 21 providers"/>
</dbReference>
<dbReference type="DNASU" id="88745"/>
<dbReference type="Ensembl" id="ENST00000244496.6">
    <molecule id="Q96EU6-1"/>
    <property type="protein sequence ID" value="ENSP00000244496.5"/>
    <property type="gene ID" value="ENSG00000124541.7"/>
</dbReference>
<dbReference type="GeneID" id="88745"/>
<dbReference type="KEGG" id="hsa:88745"/>
<dbReference type="MANE-Select" id="ENST00000244496.6">
    <property type="protein sequence ID" value="ENSP00000244496.5"/>
    <property type="RefSeq nucleotide sequence ID" value="NM_033112.4"/>
    <property type="RefSeq protein sequence ID" value="NP_149103.1"/>
</dbReference>
<dbReference type="UCSC" id="uc003otp.2">
    <molecule id="Q96EU6-1"/>
    <property type="organism name" value="human"/>
</dbReference>
<dbReference type="AGR" id="HGNC:21374"/>
<dbReference type="CTD" id="88745"/>
<dbReference type="DisGeNET" id="88745"/>
<dbReference type="GeneCards" id="RRP36"/>
<dbReference type="HGNC" id="HGNC:21374">
    <property type="gene designation" value="RRP36"/>
</dbReference>
<dbReference type="HPA" id="ENSG00000124541">
    <property type="expression patterns" value="Low tissue specificity"/>
</dbReference>
<dbReference type="MIM" id="613475">
    <property type="type" value="gene"/>
</dbReference>
<dbReference type="neXtProt" id="NX_Q96EU6"/>
<dbReference type="OpenTargets" id="ENSG00000124541"/>
<dbReference type="PharmGKB" id="PA165618219"/>
<dbReference type="VEuPathDB" id="HostDB:ENSG00000124541"/>
<dbReference type="eggNOG" id="KOG3190">
    <property type="taxonomic scope" value="Eukaryota"/>
</dbReference>
<dbReference type="GeneTree" id="ENSGT00530000064271"/>
<dbReference type="HOGENOM" id="CLU_048802_4_0_1"/>
<dbReference type="InParanoid" id="Q96EU6"/>
<dbReference type="OMA" id="ERKEMPW"/>
<dbReference type="OrthoDB" id="448446at2759"/>
<dbReference type="PAN-GO" id="Q96EU6">
    <property type="GO annotations" value="3 GO annotations based on evolutionary models"/>
</dbReference>
<dbReference type="PhylomeDB" id="Q96EU6"/>
<dbReference type="TreeFam" id="TF315154"/>
<dbReference type="PathwayCommons" id="Q96EU6"/>
<dbReference type="Reactome" id="R-HSA-6790901">
    <property type="pathway name" value="rRNA modification in the nucleus and cytosol"/>
</dbReference>
<dbReference type="Reactome" id="R-HSA-6791226">
    <property type="pathway name" value="Major pathway of rRNA processing in the nucleolus and cytosol"/>
</dbReference>
<dbReference type="SignaLink" id="Q96EU6"/>
<dbReference type="BioGRID-ORCS" id="88745">
    <property type="hits" value="246 hits in 1166 CRISPR screens"/>
</dbReference>
<dbReference type="CD-CODE" id="91857CE7">
    <property type="entry name" value="Nucleolus"/>
</dbReference>
<dbReference type="ChiTaRS" id="RRP36">
    <property type="organism name" value="human"/>
</dbReference>
<dbReference type="GenomeRNAi" id="88745"/>
<dbReference type="Pharos" id="Q96EU6">
    <property type="development level" value="Tbio"/>
</dbReference>
<dbReference type="PRO" id="PR:Q96EU6"/>
<dbReference type="Proteomes" id="UP000005640">
    <property type="component" value="Chromosome 6"/>
</dbReference>
<dbReference type="RNAct" id="Q96EU6">
    <property type="molecule type" value="protein"/>
</dbReference>
<dbReference type="Bgee" id="ENSG00000124541">
    <property type="expression patterns" value="Expressed in tibialis anterior and 175 other cell types or tissues"/>
</dbReference>
<dbReference type="ExpressionAtlas" id="Q96EU6">
    <property type="expression patterns" value="baseline and differential"/>
</dbReference>
<dbReference type="GO" id="GO:0030686">
    <property type="term" value="C:90S preribosome"/>
    <property type="evidence" value="ECO:0000318"/>
    <property type="project" value="GO_Central"/>
</dbReference>
<dbReference type="GO" id="GO:0005730">
    <property type="term" value="C:nucleolus"/>
    <property type="evidence" value="ECO:0000314"/>
    <property type="project" value="HPA"/>
</dbReference>
<dbReference type="GO" id="GO:0005654">
    <property type="term" value="C:nucleoplasm"/>
    <property type="evidence" value="ECO:0000314"/>
    <property type="project" value="HPA"/>
</dbReference>
<dbReference type="GO" id="GO:0003723">
    <property type="term" value="F:RNA binding"/>
    <property type="evidence" value="ECO:0007005"/>
    <property type="project" value="UniProtKB"/>
</dbReference>
<dbReference type="GO" id="GO:0000462">
    <property type="term" value="P:maturation of SSU-rRNA from tricistronic rRNA transcript (SSU-rRNA, 5.8S rRNA, LSU-rRNA)"/>
    <property type="evidence" value="ECO:0000318"/>
    <property type="project" value="GO_Central"/>
</dbReference>
<dbReference type="GO" id="GO:0042274">
    <property type="term" value="P:ribosomal small subunit biogenesis"/>
    <property type="evidence" value="ECO:0000314"/>
    <property type="project" value="UniProtKB"/>
</dbReference>
<dbReference type="GO" id="GO:0006364">
    <property type="term" value="P:rRNA processing"/>
    <property type="evidence" value="ECO:0000314"/>
    <property type="project" value="UniProtKB"/>
</dbReference>
<dbReference type="InterPro" id="IPR009292">
    <property type="entry name" value="RRP36"/>
</dbReference>
<dbReference type="PANTHER" id="PTHR21738">
    <property type="entry name" value="RIBOSOMAL RNA PROCESSING PROTEIN 36 HOMOLOG"/>
    <property type="match status" value="1"/>
</dbReference>
<dbReference type="PANTHER" id="PTHR21738:SF0">
    <property type="entry name" value="RIBOSOMAL RNA PROCESSING PROTEIN 36 HOMOLOG"/>
    <property type="match status" value="1"/>
</dbReference>
<dbReference type="Pfam" id="PF06102">
    <property type="entry name" value="RRP36"/>
    <property type="match status" value="1"/>
</dbReference>
<reference key="1">
    <citation type="journal article" date="2003" name="Nature">
        <title>The DNA sequence and analysis of human chromosome 6.</title>
        <authorList>
            <person name="Mungall A.J."/>
            <person name="Palmer S.A."/>
            <person name="Sims S.K."/>
            <person name="Edwards C.A."/>
            <person name="Ashurst J.L."/>
            <person name="Wilming L."/>
            <person name="Jones M.C."/>
            <person name="Horton R."/>
            <person name="Hunt S.E."/>
            <person name="Scott C.E."/>
            <person name="Gilbert J.G.R."/>
            <person name="Clamp M.E."/>
            <person name="Bethel G."/>
            <person name="Milne S."/>
            <person name="Ainscough R."/>
            <person name="Almeida J.P."/>
            <person name="Ambrose K.D."/>
            <person name="Andrews T.D."/>
            <person name="Ashwell R.I.S."/>
            <person name="Babbage A.K."/>
            <person name="Bagguley C.L."/>
            <person name="Bailey J."/>
            <person name="Banerjee R."/>
            <person name="Barker D.J."/>
            <person name="Barlow K.F."/>
            <person name="Bates K."/>
            <person name="Beare D.M."/>
            <person name="Beasley H."/>
            <person name="Beasley O."/>
            <person name="Bird C.P."/>
            <person name="Blakey S.E."/>
            <person name="Bray-Allen S."/>
            <person name="Brook J."/>
            <person name="Brown A.J."/>
            <person name="Brown J.Y."/>
            <person name="Burford D.C."/>
            <person name="Burrill W."/>
            <person name="Burton J."/>
            <person name="Carder C."/>
            <person name="Carter N.P."/>
            <person name="Chapman J.C."/>
            <person name="Clark S.Y."/>
            <person name="Clark G."/>
            <person name="Clee C.M."/>
            <person name="Clegg S."/>
            <person name="Cobley V."/>
            <person name="Collier R.E."/>
            <person name="Collins J.E."/>
            <person name="Colman L.K."/>
            <person name="Corby N.R."/>
            <person name="Coville G.J."/>
            <person name="Culley K.M."/>
            <person name="Dhami P."/>
            <person name="Davies J."/>
            <person name="Dunn M."/>
            <person name="Earthrowl M.E."/>
            <person name="Ellington A.E."/>
            <person name="Evans K.A."/>
            <person name="Faulkner L."/>
            <person name="Francis M.D."/>
            <person name="Frankish A."/>
            <person name="Frankland J."/>
            <person name="French L."/>
            <person name="Garner P."/>
            <person name="Garnett J."/>
            <person name="Ghori M.J."/>
            <person name="Gilby L.M."/>
            <person name="Gillson C.J."/>
            <person name="Glithero R.J."/>
            <person name="Grafham D.V."/>
            <person name="Grant M."/>
            <person name="Gribble S."/>
            <person name="Griffiths C."/>
            <person name="Griffiths M.N.D."/>
            <person name="Hall R."/>
            <person name="Halls K.S."/>
            <person name="Hammond S."/>
            <person name="Harley J.L."/>
            <person name="Hart E.A."/>
            <person name="Heath P.D."/>
            <person name="Heathcott R."/>
            <person name="Holmes S.J."/>
            <person name="Howden P.J."/>
            <person name="Howe K.L."/>
            <person name="Howell G.R."/>
            <person name="Huckle E."/>
            <person name="Humphray S.J."/>
            <person name="Humphries M.D."/>
            <person name="Hunt A.R."/>
            <person name="Johnson C.M."/>
            <person name="Joy A.A."/>
            <person name="Kay M."/>
            <person name="Keenan S.J."/>
            <person name="Kimberley A.M."/>
            <person name="King A."/>
            <person name="Laird G.K."/>
            <person name="Langford C."/>
            <person name="Lawlor S."/>
            <person name="Leongamornlert D.A."/>
            <person name="Leversha M."/>
            <person name="Lloyd C.R."/>
            <person name="Lloyd D.M."/>
            <person name="Loveland J.E."/>
            <person name="Lovell J."/>
            <person name="Martin S."/>
            <person name="Mashreghi-Mohammadi M."/>
            <person name="Maslen G.L."/>
            <person name="Matthews L."/>
            <person name="McCann O.T."/>
            <person name="McLaren S.J."/>
            <person name="McLay K."/>
            <person name="McMurray A."/>
            <person name="Moore M.J.F."/>
            <person name="Mullikin J.C."/>
            <person name="Niblett D."/>
            <person name="Nickerson T."/>
            <person name="Novik K.L."/>
            <person name="Oliver K."/>
            <person name="Overton-Larty E.K."/>
            <person name="Parker A."/>
            <person name="Patel R."/>
            <person name="Pearce A.V."/>
            <person name="Peck A.I."/>
            <person name="Phillimore B.J.C.T."/>
            <person name="Phillips S."/>
            <person name="Plumb R.W."/>
            <person name="Porter K.M."/>
            <person name="Ramsey Y."/>
            <person name="Ranby S.A."/>
            <person name="Rice C.M."/>
            <person name="Ross M.T."/>
            <person name="Searle S.M."/>
            <person name="Sehra H.K."/>
            <person name="Sheridan E."/>
            <person name="Skuce C.D."/>
            <person name="Smith S."/>
            <person name="Smith M."/>
            <person name="Spraggon L."/>
            <person name="Squares S.L."/>
            <person name="Steward C.A."/>
            <person name="Sycamore N."/>
            <person name="Tamlyn-Hall G."/>
            <person name="Tester J."/>
            <person name="Theaker A.J."/>
            <person name="Thomas D.W."/>
            <person name="Thorpe A."/>
            <person name="Tracey A."/>
            <person name="Tromans A."/>
            <person name="Tubby B."/>
            <person name="Wall M."/>
            <person name="Wallis J.M."/>
            <person name="West A.P."/>
            <person name="White S.S."/>
            <person name="Whitehead S.L."/>
            <person name="Whittaker H."/>
            <person name="Wild A."/>
            <person name="Willey D.J."/>
            <person name="Wilmer T.E."/>
            <person name="Wood J.M."/>
            <person name="Wray P.W."/>
            <person name="Wyatt J.C."/>
            <person name="Young L."/>
            <person name="Younger R.M."/>
            <person name="Bentley D.R."/>
            <person name="Coulson A."/>
            <person name="Durbin R.M."/>
            <person name="Hubbard T."/>
            <person name="Sulston J.E."/>
            <person name="Dunham I."/>
            <person name="Rogers J."/>
            <person name="Beck S."/>
        </authorList>
    </citation>
    <scope>NUCLEOTIDE SEQUENCE [LARGE SCALE GENOMIC DNA]</scope>
</reference>
<reference key="2">
    <citation type="journal article" date="2004" name="Genome Res.">
        <title>The status, quality, and expansion of the NIH full-length cDNA project: the Mammalian Gene Collection (MGC).</title>
        <authorList>
            <consortium name="The MGC Project Team"/>
        </authorList>
    </citation>
    <scope>NUCLEOTIDE SEQUENCE [LARGE SCALE MRNA] (ISOFORMS 1 AND 2)</scope>
    <source>
        <tissue>B-cell</tissue>
        <tissue>Pancreas</tissue>
    </source>
</reference>
<reference key="3">
    <citation type="submission" date="1999-05" db="EMBL/GenBank/DDBJ databases">
        <title>Human partial CDS from CD34+ stem cells.</title>
        <authorList>
            <person name="Ye M."/>
            <person name="Zhang Q.-H."/>
            <person name="Zhou J."/>
            <person name="Shen Y."/>
            <person name="Wu X.-Y."/>
            <person name="Guan Z.Q."/>
            <person name="Wang L."/>
            <person name="Fan H.-Y."/>
            <person name="Mao Y.-F."/>
            <person name="Dai M."/>
            <person name="Huang Q.-H."/>
            <person name="Chen S.-J."/>
            <person name="Chen Z."/>
        </authorList>
    </citation>
    <scope>NUCLEOTIDE SEQUENCE [LARGE SCALE MRNA] OF 80-259 (ISOFORM 1)</scope>
    <source>
        <tissue>Umbilical cord blood</tissue>
    </source>
</reference>
<reference key="4">
    <citation type="journal article" date="2005" name="Proc. Natl. Acad. Sci. U.S.A.">
        <title>Complex humoral immune response against a benign tumor: frequent antibody response against specific antigens as diagnostic targets.</title>
        <authorList>
            <person name="Comtesse N."/>
            <person name="Zippel A."/>
            <person name="Walle S."/>
            <person name="Monz D."/>
            <person name="Backes C."/>
            <person name="Fischer U."/>
            <person name="Mayer J."/>
            <person name="Ludwig N."/>
            <person name="Hildebrandt A."/>
            <person name="Keller A."/>
            <person name="Steudel W.-I."/>
            <person name="Lenhof H.-P."/>
            <person name="Meese E."/>
        </authorList>
    </citation>
    <scope>IDENTIFICATION AS A MENINGIOMA ANTIGEN</scope>
</reference>
<reference key="5">
    <citation type="journal article" date="2006" name="Cell">
        <title>Global, in vivo, and site-specific phosphorylation dynamics in signaling networks.</title>
        <authorList>
            <person name="Olsen J.V."/>
            <person name="Blagoev B."/>
            <person name="Gnad F."/>
            <person name="Macek B."/>
            <person name="Kumar C."/>
            <person name="Mortensen P."/>
            <person name="Mann M."/>
        </authorList>
    </citation>
    <scope>PHOSPHORYLATION [LARGE SCALE ANALYSIS] AT SER-73</scope>
    <scope>IDENTIFICATION BY MASS SPECTROMETRY [LARGE SCALE ANALYSIS]</scope>
    <source>
        <tissue>Cervix carcinoma</tissue>
    </source>
</reference>
<reference key="6">
    <citation type="journal article" date="2008" name="Proc. Natl. Acad. Sci. U.S.A.">
        <title>A quantitative atlas of mitotic phosphorylation.</title>
        <authorList>
            <person name="Dephoure N."/>
            <person name="Zhou C."/>
            <person name="Villen J."/>
            <person name="Beausoleil S.A."/>
            <person name="Bakalarski C.E."/>
            <person name="Elledge S.J."/>
            <person name="Gygi S.P."/>
        </authorList>
    </citation>
    <scope>IDENTIFICATION BY MASS SPECTROMETRY [LARGE SCALE ANALYSIS]</scope>
    <source>
        <tissue>Cervix carcinoma</tissue>
    </source>
</reference>
<reference key="7">
    <citation type="journal article" date="2010" name="Mol. Cell. Biol.">
        <title>Evolutionarily conserved function of RRP36 in early cleavages of the pre-rRNA and production of the 40S ribosomal subunit.</title>
        <authorList>
            <person name="Gerus M."/>
            <person name="Bonnart C."/>
            <person name="Caizergues-Ferrer M."/>
            <person name="Henry Y."/>
            <person name="Henras A.K."/>
        </authorList>
    </citation>
    <scope>SUBCELLULAR LOCATION</scope>
    <scope>FUNCTION</scope>
</reference>
<reference key="8">
    <citation type="journal article" date="2010" name="Sci. Signal.">
        <title>Quantitative phosphoproteomics reveals widespread full phosphorylation site occupancy during mitosis.</title>
        <authorList>
            <person name="Olsen J.V."/>
            <person name="Vermeulen M."/>
            <person name="Santamaria A."/>
            <person name="Kumar C."/>
            <person name="Miller M.L."/>
            <person name="Jensen L.J."/>
            <person name="Gnad F."/>
            <person name="Cox J."/>
            <person name="Jensen T.S."/>
            <person name="Nigg E.A."/>
            <person name="Brunak S."/>
            <person name="Mann M."/>
        </authorList>
    </citation>
    <scope>PHOSPHORYLATION [LARGE SCALE ANALYSIS] AT SER-73</scope>
    <scope>IDENTIFICATION BY MASS SPECTROMETRY [LARGE SCALE ANALYSIS]</scope>
    <source>
        <tissue>Cervix carcinoma</tissue>
    </source>
</reference>
<reference key="9">
    <citation type="journal article" date="2011" name="Sci. Signal.">
        <title>System-wide temporal characterization of the proteome and phosphoproteome of human embryonic stem cell differentiation.</title>
        <authorList>
            <person name="Rigbolt K.T."/>
            <person name="Prokhorova T.A."/>
            <person name="Akimov V."/>
            <person name="Henningsen J."/>
            <person name="Johansen P.T."/>
            <person name="Kratchmarova I."/>
            <person name="Kassem M."/>
            <person name="Mann M."/>
            <person name="Olsen J.V."/>
            <person name="Blagoev B."/>
        </authorList>
    </citation>
    <scope>PHOSPHORYLATION [LARGE SCALE ANALYSIS] AT SER-73</scope>
    <scope>IDENTIFICATION BY MASS SPECTROMETRY [LARGE SCALE ANALYSIS]</scope>
</reference>
<reference key="10">
    <citation type="journal article" date="2013" name="J. Proteome Res.">
        <title>Toward a comprehensive characterization of a human cancer cell phosphoproteome.</title>
        <authorList>
            <person name="Zhou H."/>
            <person name="Di Palma S."/>
            <person name="Preisinger C."/>
            <person name="Peng M."/>
            <person name="Polat A.N."/>
            <person name="Heck A.J."/>
            <person name="Mohammed S."/>
        </authorList>
    </citation>
    <scope>PHOSPHORYLATION [LARGE SCALE ANALYSIS] AT SER-73</scope>
    <scope>IDENTIFICATION BY MASS SPECTROMETRY [LARGE SCALE ANALYSIS]</scope>
    <source>
        <tissue>Cervix carcinoma</tissue>
    </source>
</reference>